<protein>
    <recommendedName>
        <fullName evidence="3">Steroid 5-alpha-reductase DET2</fullName>
        <shortName evidence="3">LeDET2</shortName>
        <ecNumber evidence="2">1.3.1.22</ecNumber>
    </recommendedName>
</protein>
<keyword id="KW-0472">Membrane</keyword>
<keyword id="KW-0521">NADP</keyword>
<keyword id="KW-0560">Oxidoreductase</keyword>
<keyword id="KW-1185">Reference proteome</keyword>
<keyword id="KW-0812">Transmembrane</keyword>
<keyword id="KW-1133">Transmembrane helix</keyword>
<feature type="chain" id="PRO_0000418515" description="Steroid 5-alpha-reductase DET2">
    <location>
        <begin position="1"/>
        <end position="257"/>
    </location>
</feature>
<feature type="transmembrane region" description="Helical" evidence="1">
    <location>
        <begin position="11"/>
        <end position="31"/>
    </location>
</feature>
<feature type="transmembrane region" description="Helical" evidence="1">
    <location>
        <begin position="47"/>
        <end position="67"/>
    </location>
</feature>
<feature type="transmembrane region" description="Helical" evidence="1">
    <location>
        <begin position="78"/>
        <end position="97"/>
    </location>
</feature>
<feature type="transmembrane region" description="Helical" evidence="1">
    <location>
        <begin position="110"/>
        <end position="130"/>
    </location>
</feature>
<feature type="transmembrane region" description="Helical" evidence="1">
    <location>
        <begin position="151"/>
        <end position="171"/>
    </location>
</feature>
<feature type="transmembrane region" description="Helical" evidence="1">
    <location>
        <begin position="200"/>
        <end position="220"/>
    </location>
</feature>
<accession>Q5K2N1</accession>
<comment type="function">
    <text evidence="2">Involved in a reduction step in the biosynthesis of the plant steroid, brassinolide (BL) (PubMed:15993049). Can use progesterone, testosterone, androstenedione and campestenone as substrate (PubMed:15993049).</text>
</comment>
<comment type="catalytic activity">
    <reaction evidence="2">
        <text>a 3-oxo-5alpha-steroid + NADP(+) = a 3-oxo-Delta(4)-steroid + NADPH + H(+)</text>
        <dbReference type="Rhea" id="RHEA:54384"/>
        <dbReference type="ChEBI" id="CHEBI:13601"/>
        <dbReference type="ChEBI" id="CHEBI:15378"/>
        <dbReference type="ChEBI" id="CHEBI:47909"/>
        <dbReference type="ChEBI" id="CHEBI:57783"/>
        <dbReference type="ChEBI" id="CHEBI:58349"/>
        <dbReference type="EC" id="1.3.1.22"/>
    </reaction>
</comment>
<comment type="activity regulation">
    <text evidence="2">Repressed by steroid (4-MA, VG106, PD91, PD17, Finasteride) and non-steroid (AS601811, AFA27, AFA76, AFA131, AFA192) inhibitors; steroid inhibitors are generally more efficient.</text>
</comment>
<comment type="biophysicochemical properties">
    <kinetics>
        <KM evidence="2">0.75 uM for progesterone (expressed in COS-7 cells)</KM>
        <KM evidence="2">26 uM for androstenedione (expressed in COS-7 cells)</KM>
        <KM evidence="2">40 uM for testosterone (expressed in COS-7 cells)</KM>
        <Vmax evidence="2">0.34 nmol/min/mg enzyme with progesterone as substrate (expressed in COS-7 cells)</Vmax>
        <Vmax evidence="2">0.32 nmol/min/mg enzyme with androstenedione as substrate (expressed in COS-7 cells)</Vmax>
        <Vmax evidence="2">0.21 nmol/min/mg enzyme with testosterone as substrate (expressed in COS-7 cells)</Vmax>
    </kinetics>
</comment>
<comment type="pathway">
    <text evidence="2">Plant hormone biosynthesis; brassinosteroid biosynthesis.</text>
</comment>
<comment type="subcellular location">
    <subcellularLocation>
        <location evidence="1">Membrane</location>
        <topology evidence="1">Multi-pass membrane protein</topology>
    </subcellularLocation>
</comment>
<comment type="tissue specificity">
    <text evidence="2">Mostly expressed in leaves and hypocotyls and, to a lower extent, in stems, cotyledons, roots, seeds and callus.</text>
</comment>
<comment type="similarity">
    <text evidence="4">Belongs to the steroid 5-alpha reductase family.</text>
</comment>
<name>DET2_SOLLC</name>
<gene>
    <name evidence="3" type="primary">DET2</name>
</gene>
<reference key="1">
    <citation type="journal article" date="2005" name="J. Steroid Biochem. Mol. Biol.">
        <title>5alpha-Reductase activity in Lycopersicon esculentum: cloning and functional characterization of LeDET2 and evidence of the presence of two isoenzymes.</title>
        <authorList>
            <person name="Rosati F."/>
            <person name="Bardazzi I."/>
            <person name="De Blasi P."/>
            <person name="Simi L."/>
            <person name="Scarpi D."/>
            <person name="Guarna A."/>
            <person name="Serio M."/>
            <person name="Racchi M.L."/>
            <person name="Danza G."/>
        </authorList>
    </citation>
    <scope>NUCLEOTIDE SEQUENCE [MRNA]</scope>
    <scope>FUNCTION</scope>
    <scope>CATALYTIC ACTIVITY</scope>
    <scope>ACTIVITY REGULATION</scope>
    <scope>TISSUE SPECIFICITY</scope>
    <scope>BIOPHYSICOCHEMICAL PROPERTIES</scope>
    <scope>PATHWAY</scope>
    <source>
        <strain>cv. Saint Pierre</strain>
        <tissue>Leaf</tissue>
    </source>
</reference>
<dbReference type="EC" id="1.3.1.22" evidence="2"/>
<dbReference type="EMBL" id="AJ786362">
    <property type="protein sequence ID" value="CAH05260.1"/>
    <property type="molecule type" value="mRNA"/>
</dbReference>
<dbReference type="RefSeq" id="NP_001234040.1">
    <property type="nucleotide sequence ID" value="NM_001247111.2"/>
</dbReference>
<dbReference type="SMR" id="Q5K2N1"/>
<dbReference type="FunCoup" id="Q5K2N1">
    <property type="interactions" value="484"/>
</dbReference>
<dbReference type="STRING" id="4081.Q5K2N1"/>
<dbReference type="PaxDb" id="4081-Solyc10g086500.1.1"/>
<dbReference type="EnsemblPlants" id="Solyc10g086500.1.1">
    <property type="protein sequence ID" value="Solyc10g086500.1.1.1"/>
    <property type="gene ID" value="Solyc10g086500.1"/>
</dbReference>
<dbReference type="GeneID" id="543801"/>
<dbReference type="Gramene" id="Solyc10g086500.1.1">
    <property type="protein sequence ID" value="Solyc10g086500.1.1.1"/>
    <property type="gene ID" value="Solyc10g086500.1"/>
</dbReference>
<dbReference type="KEGG" id="sly:543801"/>
<dbReference type="eggNOG" id="KOG1638">
    <property type="taxonomic scope" value="Eukaryota"/>
</dbReference>
<dbReference type="HOGENOM" id="CLU_065395_1_0_1"/>
<dbReference type="InParanoid" id="Q5K2N1"/>
<dbReference type="OMA" id="MFCVYNG"/>
<dbReference type="OrthoDB" id="5788137at2759"/>
<dbReference type="PhylomeDB" id="Q5K2N1"/>
<dbReference type="BioCyc" id="MetaCyc:MONOMER-21176"/>
<dbReference type="BRENDA" id="1.3.1.22">
    <property type="organism ID" value="3101"/>
</dbReference>
<dbReference type="SABIO-RK" id="Q5K2N1"/>
<dbReference type="UniPathway" id="UPA00381"/>
<dbReference type="Proteomes" id="UP000004994">
    <property type="component" value="Chromosome 10"/>
</dbReference>
<dbReference type="GO" id="GO:0016020">
    <property type="term" value="C:membrane"/>
    <property type="evidence" value="ECO:0007669"/>
    <property type="project" value="UniProtKB-SubCell"/>
</dbReference>
<dbReference type="GO" id="GO:0047751">
    <property type="term" value="F:3-oxo-5-alpha-steroid 4-dehydrogenase (NADP+) activity"/>
    <property type="evidence" value="ECO:0000314"/>
    <property type="project" value="UniProtKB"/>
</dbReference>
<dbReference type="GO" id="GO:0016491">
    <property type="term" value="F:oxidoreductase activity"/>
    <property type="evidence" value="ECO:0000318"/>
    <property type="project" value="GO_Central"/>
</dbReference>
<dbReference type="GO" id="GO:0016132">
    <property type="term" value="P:brassinosteroid biosynthetic process"/>
    <property type="evidence" value="ECO:0000318"/>
    <property type="project" value="GO_Central"/>
</dbReference>
<dbReference type="FunFam" id="1.20.120.1630:FF:000002">
    <property type="entry name" value="Steroid 5 alpha-reductase 1"/>
    <property type="match status" value="1"/>
</dbReference>
<dbReference type="Gene3D" id="1.20.120.1630">
    <property type="match status" value="1"/>
</dbReference>
<dbReference type="InterPro" id="IPR016636">
    <property type="entry name" value="3-oxo-5-alpha-steroid_4-DH"/>
</dbReference>
<dbReference type="InterPro" id="IPR001104">
    <property type="entry name" value="3-oxo-5_a-steroid_4-DH_C"/>
</dbReference>
<dbReference type="InterPro" id="IPR039357">
    <property type="entry name" value="SRD5A/TECR"/>
</dbReference>
<dbReference type="PANTHER" id="PTHR10556">
    <property type="entry name" value="3-OXO-5-ALPHA-STEROID 4-DEHYDROGENASE"/>
    <property type="match status" value="1"/>
</dbReference>
<dbReference type="PANTHER" id="PTHR10556:SF53">
    <property type="entry name" value="STEROID 5-ALPHA-REDUCTASE DET2"/>
    <property type="match status" value="1"/>
</dbReference>
<dbReference type="Pfam" id="PF02544">
    <property type="entry name" value="Steroid_dh"/>
    <property type="match status" value="1"/>
</dbReference>
<dbReference type="PIRSF" id="PIRSF015596">
    <property type="entry name" value="5_alpha-SR2"/>
    <property type="match status" value="1"/>
</dbReference>
<dbReference type="PROSITE" id="PS50244">
    <property type="entry name" value="S5A_REDUCTASE"/>
    <property type="match status" value="1"/>
</dbReference>
<evidence type="ECO:0000255" key="1"/>
<evidence type="ECO:0000269" key="2">
    <source>
    </source>
</evidence>
<evidence type="ECO:0000303" key="3">
    <source>
    </source>
</evidence>
<evidence type="ECO:0000305" key="4"/>
<sequence length="257" mass="29802">MFSSDENLFNFIVFFILVMAFPTFILCQFFTSPYGKHYTSADSGTTISPPIAWAFMESPTLWLTIIVFRLGKNYTNPLAFLLISPYLFHYTNRTIIYPLRLRSRNTKNNFPLNIAVTAFIFNLLNAYIQSRWVSHYANYQEDDWFWVRFGIGLVIFGSGMLLNIWADGVLLGLKSQGGGYKIPRGGLFDYVSSPNYLGEIMEWLGWALMTWSWAGLAFFVYTCANLVPRAVSNHKWYLQKFGEDYPKNRKAVFPFLY</sequence>
<proteinExistence type="evidence at protein level"/>
<organism>
    <name type="scientific">Solanum lycopersicum</name>
    <name type="common">Tomato</name>
    <name type="synonym">Lycopersicon esculentum</name>
    <dbReference type="NCBI Taxonomy" id="4081"/>
    <lineage>
        <taxon>Eukaryota</taxon>
        <taxon>Viridiplantae</taxon>
        <taxon>Streptophyta</taxon>
        <taxon>Embryophyta</taxon>
        <taxon>Tracheophyta</taxon>
        <taxon>Spermatophyta</taxon>
        <taxon>Magnoliopsida</taxon>
        <taxon>eudicotyledons</taxon>
        <taxon>Gunneridae</taxon>
        <taxon>Pentapetalae</taxon>
        <taxon>asterids</taxon>
        <taxon>lamiids</taxon>
        <taxon>Solanales</taxon>
        <taxon>Solanaceae</taxon>
        <taxon>Solanoideae</taxon>
        <taxon>Solaneae</taxon>
        <taxon>Solanum</taxon>
        <taxon>Solanum subgen. Lycopersicon</taxon>
    </lineage>
</organism>